<reference key="1">
    <citation type="submission" date="2006-03" db="EMBL/GenBank/DDBJ databases">
        <title>Complete genome sequence of Gemmatimonas aurantiaca T-27 that represents a novel phylum Gemmatimonadetes.</title>
        <authorList>
            <person name="Takasaki K."/>
            <person name="Ichikawa N."/>
            <person name="Miura H."/>
            <person name="Matsushita S."/>
            <person name="Watanabe Y."/>
            <person name="Oguchi A."/>
            <person name="Ankai A."/>
            <person name="Yashiro I."/>
            <person name="Takahashi M."/>
            <person name="Terui Y."/>
            <person name="Fukui S."/>
            <person name="Yokoyama H."/>
            <person name="Tanikawa S."/>
            <person name="Hanada S."/>
            <person name="Kamagata Y."/>
            <person name="Fujita N."/>
        </authorList>
    </citation>
    <scope>NUCLEOTIDE SEQUENCE [LARGE SCALE GENOMIC DNA]</scope>
    <source>
        <strain>DSM 14586 / JCM 11422 / NBRC 100505 / T-27</strain>
    </source>
</reference>
<feature type="chain" id="PRO_1000202533" description="ATP phosphoribosyltransferase">
    <location>
        <begin position="1"/>
        <end position="292"/>
    </location>
</feature>
<protein>
    <recommendedName>
        <fullName evidence="1">ATP phosphoribosyltransferase</fullName>
        <shortName evidence="1">ATP-PRT</shortName>
        <shortName evidence="1">ATP-PRTase</shortName>
        <ecNumber evidence="1">2.4.2.17</ecNumber>
    </recommendedName>
</protein>
<sequence length="292" mass="31191">MLRIALPNKGRLSEDTRGLFNDAGLEVRSSGERALTASLGGEFEAIFVRAQDIPEFVADGAADAGVTGWDLVSESGRELTSHLDLGFGRCRLVVAAREDAGVRSLEDLARQAPPMRVATVFPNITRRFFEMAGVPVTVVPVSGAAEIAPHLGIADVVVDLTSTGSTLRVNGLREVETVLRSSAHLITAVAGPRNGDVSRKQEFDDLVTALASVIRARGQRYLMANVPREVLDAVRAVLPGLNGPTVIDIADHSRYVAVHAVVSADTIYRTISQLRALGGEGILVTRIERLIP</sequence>
<accession>C1A4M2</accession>
<evidence type="ECO:0000255" key="1">
    <source>
        <dbReference type="HAMAP-Rule" id="MF_00079"/>
    </source>
</evidence>
<gene>
    <name evidence="1" type="primary">hisG</name>
    <name type="ordered locus">GAU_0140</name>
</gene>
<organism>
    <name type="scientific">Gemmatimonas aurantiaca (strain DSM 14586 / JCM 11422 / NBRC 100505 / T-27)</name>
    <dbReference type="NCBI Taxonomy" id="379066"/>
    <lineage>
        <taxon>Bacteria</taxon>
        <taxon>Pseudomonadati</taxon>
        <taxon>Gemmatimonadota</taxon>
        <taxon>Gemmatimonadia</taxon>
        <taxon>Gemmatimonadales</taxon>
        <taxon>Gemmatimonadaceae</taxon>
        <taxon>Gemmatimonas</taxon>
    </lineage>
</organism>
<proteinExistence type="inferred from homology"/>
<dbReference type="EC" id="2.4.2.17" evidence="1"/>
<dbReference type="EMBL" id="AP009153">
    <property type="protein sequence ID" value="BAH37182.1"/>
    <property type="molecule type" value="Genomic_DNA"/>
</dbReference>
<dbReference type="RefSeq" id="WP_012681630.1">
    <property type="nucleotide sequence ID" value="NC_012489.1"/>
</dbReference>
<dbReference type="SMR" id="C1A4M2"/>
<dbReference type="STRING" id="379066.GAU_0140"/>
<dbReference type="KEGG" id="gau:GAU_0140"/>
<dbReference type="eggNOG" id="COG0040">
    <property type="taxonomic scope" value="Bacteria"/>
</dbReference>
<dbReference type="HOGENOM" id="CLU_038115_1_0_0"/>
<dbReference type="OrthoDB" id="9801867at2"/>
<dbReference type="UniPathway" id="UPA00031">
    <property type="reaction ID" value="UER00006"/>
</dbReference>
<dbReference type="Proteomes" id="UP000002209">
    <property type="component" value="Chromosome"/>
</dbReference>
<dbReference type="GO" id="GO:0005737">
    <property type="term" value="C:cytoplasm"/>
    <property type="evidence" value="ECO:0007669"/>
    <property type="project" value="UniProtKB-SubCell"/>
</dbReference>
<dbReference type="GO" id="GO:0005524">
    <property type="term" value="F:ATP binding"/>
    <property type="evidence" value="ECO:0007669"/>
    <property type="project" value="UniProtKB-KW"/>
</dbReference>
<dbReference type="GO" id="GO:0003879">
    <property type="term" value="F:ATP phosphoribosyltransferase activity"/>
    <property type="evidence" value="ECO:0007669"/>
    <property type="project" value="UniProtKB-UniRule"/>
</dbReference>
<dbReference type="GO" id="GO:0000287">
    <property type="term" value="F:magnesium ion binding"/>
    <property type="evidence" value="ECO:0007669"/>
    <property type="project" value="UniProtKB-UniRule"/>
</dbReference>
<dbReference type="GO" id="GO:0000105">
    <property type="term" value="P:L-histidine biosynthetic process"/>
    <property type="evidence" value="ECO:0007669"/>
    <property type="project" value="UniProtKB-UniRule"/>
</dbReference>
<dbReference type="CDD" id="cd13594">
    <property type="entry name" value="PBP2_HisGL4"/>
    <property type="match status" value="1"/>
</dbReference>
<dbReference type="FunFam" id="3.30.70.120:FF:000002">
    <property type="entry name" value="ATP phosphoribosyltransferase"/>
    <property type="match status" value="1"/>
</dbReference>
<dbReference type="Gene3D" id="3.30.70.120">
    <property type="match status" value="1"/>
</dbReference>
<dbReference type="Gene3D" id="3.40.190.10">
    <property type="entry name" value="Periplasmic binding protein-like II"/>
    <property type="match status" value="2"/>
</dbReference>
<dbReference type="HAMAP" id="MF_00079">
    <property type="entry name" value="HisG_Long"/>
    <property type="match status" value="1"/>
</dbReference>
<dbReference type="InterPro" id="IPR020621">
    <property type="entry name" value="ATP-PRT_HisG_long"/>
</dbReference>
<dbReference type="InterPro" id="IPR013820">
    <property type="entry name" value="ATP_PRibTrfase_cat"/>
</dbReference>
<dbReference type="InterPro" id="IPR018198">
    <property type="entry name" value="ATP_PRibTrfase_CS"/>
</dbReference>
<dbReference type="InterPro" id="IPR001348">
    <property type="entry name" value="ATP_PRibTrfase_HisG"/>
</dbReference>
<dbReference type="InterPro" id="IPR013115">
    <property type="entry name" value="HisG_C"/>
</dbReference>
<dbReference type="InterPro" id="IPR011322">
    <property type="entry name" value="N-reg_PII-like_a/b"/>
</dbReference>
<dbReference type="InterPro" id="IPR015867">
    <property type="entry name" value="N-reg_PII/ATP_PRibTrfase_C"/>
</dbReference>
<dbReference type="NCBIfam" id="TIGR00070">
    <property type="entry name" value="hisG"/>
    <property type="match status" value="1"/>
</dbReference>
<dbReference type="NCBIfam" id="TIGR03455">
    <property type="entry name" value="HisG_C-term"/>
    <property type="match status" value="1"/>
</dbReference>
<dbReference type="PANTHER" id="PTHR21403:SF10">
    <property type="entry name" value="ATP PHOSPHORIBOSYLTRANSFERASE"/>
    <property type="match status" value="1"/>
</dbReference>
<dbReference type="PANTHER" id="PTHR21403">
    <property type="entry name" value="ATP PHOSPHORIBOSYLTRANSFERASE ATP-PRTASE"/>
    <property type="match status" value="1"/>
</dbReference>
<dbReference type="Pfam" id="PF01634">
    <property type="entry name" value="HisG"/>
    <property type="match status" value="1"/>
</dbReference>
<dbReference type="Pfam" id="PF08029">
    <property type="entry name" value="HisG_C"/>
    <property type="match status" value="1"/>
</dbReference>
<dbReference type="SUPFAM" id="SSF54913">
    <property type="entry name" value="GlnB-like"/>
    <property type="match status" value="1"/>
</dbReference>
<dbReference type="SUPFAM" id="SSF53850">
    <property type="entry name" value="Periplasmic binding protein-like II"/>
    <property type="match status" value="1"/>
</dbReference>
<dbReference type="PROSITE" id="PS01316">
    <property type="entry name" value="ATP_P_PHORIBOSYLTR"/>
    <property type="match status" value="1"/>
</dbReference>
<comment type="function">
    <text evidence="1">Catalyzes the condensation of ATP and 5-phosphoribose 1-diphosphate to form N'-(5'-phosphoribosyl)-ATP (PR-ATP). Has a crucial role in the pathway because the rate of histidine biosynthesis seems to be controlled primarily by regulation of HisG enzymatic activity.</text>
</comment>
<comment type="catalytic activity">
    <reaction evidence="1">
        <text>1-(5-phospho-beta-D-ribosyl)-ATP + diphosphate = 5-phospho-alpha-D-ribose 1-diphosphate + ATP</text>
        <dbReference type="Rhea" id="RHEA:18473"/>
        <dbReference type="ChEBI" id="CHEBI:30616"/>
        <dbReference type="ChEBI" id="CHEBI:33019"/>
        <dbReference type="ChEBI" id="CHEBI:58017"/>
        <dbReference type="ChEBI" id="CHEBI:73183"/>
        <dbReference type="EC" id="2.4.2.17"/>
    </reaction>
</comment>
<comment type="cofactor">
    <cofactor evidence="1">
        <name>Mg(2+)</name>
        <dbReference type="ChEBI" id="CHEBI:18420"/>
    </cofactor>
</comment>
<comment type="activity regulation">
    <text evidence="1">Feedback inhibited by histidine.</text>
</comment>
<comment type="pathway">
    <text evidence="1">Amino-acid biosynthesis; L-histidine biosynthesis; L-histidine from 5-phospho-alpha-D-ribose 1-diphosphate: step 1/9.</text>
</comment>
<comment type="subcellular location">
    <subcellularLocation>
        <location evidence="1">Cytoplasm</location>
    </subcellularLocation>
</comment>
<comment type="similarity">
    <text evidence="1">Belongs to the ATP phosphoribosyltransferase family. Long subfamily.</text>
</comment>
<keyword id="KW-0028">Amino-acid biosynthesis</keyword>
<keyword id="KW-0067">ATP-binding</keyword>
<keyword id="KW-0963">Cytoplasm</keyword>
<keyword id="KW-0328">Glycosyltransferase</keyword>
<keyword id="KW-0368">Histidine biosynthesis</keyword>
<keyword id="KW-0460">Magnesium</keyword>
<keyword id="KW-0479">Metal-binding</keyword>
<keyword id="KW-0547">Nucleotide-binding</keyword>
<keyword id="KW-1185">Reference proteome</keyword>
<keyword id="KW-0808">Transferase</keyword>
<name>HIS1_GEMAT</name>